<gene>
    <name evidence="1" type="primary">rpsP</name>
    <name type="ordered locus">MRA_2934</name>
</gene>
<evidence type="ECO:0000255" key="1">
    <source>
        <dbReference type="HAMAP-Rule" id="MF_00385"/>
    </source>
</evidence>
<evidence type="ECO:0000256" key="2">
    <source>
        <dbReference type="SAM" id="MobiDB-lite"/>
    </source>
</evidence>
<evidence type="ECO:0000305" key="3"/>
<proteinExistence type="inferred from homology"/>
<organism>
    <name type="scientific">Mycobacterium tuberculosis (strain ATCC 25177 / H37Ra)</name>
    <dbReference type="NCBI Taxonomy" id="419947"/>
    <lineage>
        <taxon>Bacteria</taxon>
        <taxon>Bacillati</taxon>
        <taxon>Actinomycetota</taxon>
        <taxon>Actinomycetes</taxon>
        <taxon>Mycobacteriales</taxon>
        <taxon>Mycobacteriaceae</taxon>
        <taxon>Mycobacterium</taxon>
        <taxon>Mycobacterium tuberculosis complex</taxon>
    </lineage>
</organism>
<dbReference type="EMBL" id="CP000611">
    <property type="protein sequence ID" value="ABQ74714.1"/>
    <property type="molecule type" value="Genomic_DNA"/>
</dbReference>
<dbReference type="RefSeq" id="WP_003414731.1">
    <property type="nucleotide sequence ID" value="NZ_CP016972.1"/>
</dbReference>
<dbReference type="SMR" id="A5U6R4"/>
<dbReference type="GeneID" id="45426896"/>
<dbReference type="KEGG" id="mra:MRA_2934"/>
<dbReference type="eggNOG" id="COG0228">
    <property type="taxonomic scope" value="Bacteria"/>
</dbReference>
<dbReference type="HOGENOM" id="CLU_100590_1_1_11"/>
<dbReference type="Proteomes" id="UP000001988">
    <property type="component" value="Chromosome"/>
</dbReference>
<dbReference type="GO" id="GO:0005737">
    <property type="term" value="C:cytoplasm"/>
    <property type="evidence" value="ECO:0007669"/>
    <property type="project" value="UniProtKB-ARBA"/>
</dbReference>
<dbReference type="GO" id="GO:0015935">
    <property type="term" value="C:small ribosomal subunit"/>
    <property type="evidence" value="ECO:0007669"/>
    <property type="project" value="TreeGrafter"/>
</dbReference>
<dbReference type="GO" id="GO:0003735">
    <property type="term" value="F:structural constituent of ribosome"/>
    <property type="evidence" value="ECO:0007669"/>
    <property type="project" value="InterPro"/>
</dbReference>
<dbReference type="GO" id="GO:0006412">
    <property type="term" value="P:translation"/>
    <property type="evidence" value="ECO:0007669"/>
    <property type="project" value="UniProtKB-UniRule"/>
</dbReference>
<dbReference type="FunFam" id="3.30.1320.10:FF:000009">
    <property type="entry name" value="30S ribosomal protein S16"/>
    <property type="match status" value="1"/>
</dbReference>
<dbReference type="Gene3D" id="3.30.1320.10">
    <property type="match status" value="1"/>
</dbReference>
<dbReference type="HAMAP" id="MF_00385">
    <property type="entry name" value="Ribosomal_bS16"/>
    <property type="match status" value="1"/>
</dbReference>
<dbReference type="InterPro" id="IPR000307">
    <property type="entry name" value="Ribosomal_bS16"/>
</dbReference>
<dbReference type="InterPro" id="IPR020592">
    <property type="entry name" value="Ribosomal_bS16_CS"/>
</dbReference>
<dbReference type="InterPro" id="IPR023803">
    <property type="entry name" value="Ribosomal_bS16_dom_sf"/>
</dbReference>
<dbReference type="NCBIfam" id="NF011093">
    <property type="entry name" value="PRK14520.1"/>
    <property type="match status" value="1"/>
</dbReference>
<dbReference type="NCBIfam" id="TIGR00002">
    <property type="entry name" value="S16"/>
    <property type="match status" value="1"/>
</dbReference>
<dbReference type="PANTHER" id="PTHR12919">
    <property type="entry name" value="30S RIBOSOMAL PROTEIN S16"/>
    <property type="match status" value="1"/>
</dbReference>
<dbReference type="PANTHER" id="PTHR12919:SF20">
    <property type="entry name" value="SMALL RIBOSOMAL SUBUNIT PROTEIN BS16M"/>
    <property type="match status" value="1"/>
</dbReference>
<dbReference type="Pfam" id="PF00886">
    <property type="entry name" value="Ribosomal_S16"/>
    <property type="match status" value="1"/>
</dbReference>
<dbReference type="SUPFAM" id="SSF54565">
    <property type="entry name" value="Ribosomal protein S16"/>
    <property type="match status" value="1"/>
</dbReference>
<dbReference type="PROSITE" id="PS00732">
    <property type="entry name" value="RIBOSOMAL_S16"/>
    <property type="match status" value="1"/>
</dbReference>
<protein>
    <recommendedName>
        <fullName evidence="1">Small ribosomal subunit protein bS16</fullName>
    </recommendedName>
    <alternativeName>
        <fullName evidence="3">30S ribosomal protein S16</fullName>
    </alternativeName>
</protein>
<sequence>MAVKIKLTRLGKIRNPQYRVAVADARTRRDGRAIEVIGRYHPKEEPSLIEINSERAQYWLSVGAQPTEPVLKLLKITGDWQKFKGLPGAQGRLKVAAPKPSKLEVFNAALAAADGGPTTEATKPKKKSPAKKAAKAAEPAPQPEQPDTPALGGEQAELTAES</sequence>
<feature type="chain" id="PRO_1000049296" description="Small ribosomal subunit protein bS16">
    <location>
        <begin position="1"/>
        <end position="162"/>
    </location>
</feature>
<feature type="region of interest" description="Disordered" evidence="2">
    <location>
        <begin position="113"/>
        <end position="162"/>
    </location>
</feature>
<feature type="compositionally biased region" description="Basic residues" evidence="2">
    <location>
        <begin position="124"/>
        <end position="134"/>
    </location>
</feature>
<name>RS16_MYCTA</name>
<accession>A5U6R4</accession>
<comment type="similarity">
    <text evidence="1">Belongs to the bacterial ribosomal protein bS16 family.</text>
</comment>
<keyword id="KW-1185">Reference proteome</keyword>
<keyword id="KW-0687">Ribonucleoprotein</keyword>
<keyword id="KW-0689">Ribosomal protein</keyword>
<reference key="1">
    <citation type="journal article" date="2008" name="PLoS ONE">
        <title>Genetic basis of virulence attenuation revealed by comparative genomic analysis of Mycobacterium tuberculosis strain H37Ra versus H37Rv.</title>
        <authorList>
            <person name="Zheng H."/>
            <person name="Lu L."/>
            <person name="Wang B."/>
            <person name="Pu S."/>
            <person name="Zhang X."/>
            <person name="Zhu G."/>
            <person name="Shi W."/>
            <person name="Zhang L."/>
            <person name="Wang H."/>
            <person name="Wang S."/>
            <person name="Zhao G."/>
            <person name="Zhang Y."/>
        </authorList>
    </citation>
    <scope>NUCLEOTIDE SEQUENCE [LARGE SCALE GENOMIC DNA]</scope>
    <source>
        <strain>ATCC 25177 / H37Ra</strain>
    </source>
</reference>